<evidence type="ECO:0000255" key="1">
    <source>
        <dbReference type="HAMAP-Rule" id="MF_00222"/>
    </source>
</evidence>
<feature type="chain" id="PRO_1000124904" description="Shikimate dehydrogenase (NADP(+))">
    <location>
        <begin position="1"/>
        <end position="276"/>
    </location>
</feature>
<feature type="active site" description="Proton acceptor" evidence="1">
    <location>
        <position position="69"/>
    </location>
</feature>
<feature type="binding site" evidence="1">
    <location>
        <begin position="18"/>
        <end position="20"/>
    </location>
    <ligand>
        <name>shikimate</name>
        <dbReference type="ChEBI" id="CHEBI:36208"/>
    </ligand>
</feature>
<feature type="binding site" evidence="1">
    <location>
        <position position="65"/>
    </location>
    <ligand>
        <name>shikimate</name>
        <dbReference type="ChEBI" id="CHEBI:36208"/>
    </ligand>
</feature>
<feature type="binding site" evidence="1">
    <location>
        <position position="81"/>
    </location>
    <ligand>
        <name>NADP(+)</name>
        <dbReference type="ChEBI" id="CHEBI:58349"/>
    </ligand>
</feature>
<feature type="binding site" evidence="1">
    <location>
        <position position="90"/>
    </location>
    <ligand>
        <name>shikimate</name>
        <dbReference type="ChEBI" id="CHEBI:36208"/>
    </ligand>
</feature>
<feature type="binding site" evidence="1">
    <location>
        <position position="106"/>
    </location>
    <ligand>
        <name>shikimate</name>
        <dbReference type="ChEBI" id="CHEBI:36208"/>
    </ligand>
</feature>
<feature type="binding site" evidence="1">
    <location>
        <begin position="130"/>
        <end position="134"/>
    </location>
    <ligand>
        <name>NADP(+)</name>
        <dbReference type="ChEBI" id="CHEBI:58349"/>
    </ligand>
</feature>
<feature type="binding site" evidence="1">
    <location>
        <begin position="154"/>
        <end position="159"/>
    </location>
    <ligand>
        <name>NADP(+)</name>
        <dbReference type="ChEBI" id="CHEBI:58349"/>
    </ligand>
</feature>
<feature type="binding site" evidence="1">
    <location>
        <position position="217"/>
    </location>
    <ligand>
        <name>NADP(+)</name>
        <dbReference type="ChEBI" id="CHEBI:58349"/>
    </ligand>
</feature>
<feature type="binding site" evidence="1">
    <location>
        <position position="219"/>
    </location>
    <ligand>
        <name>shikimate</name>
        <dbReference type="ChEBI" id="CHEBI:36208"/>
    </ligand>
</feature>
<feature type="binding site" evidence="1">
    <location>
        <position position="241"/>
    </location>
    <ligand>
        <name>NADP(+)</name>
        <dbReference type="ChEBI" id="CHEBI:58349"/>
    </ligand>
</feature>
<sequence length="276" mass="29826">MTQQVDRYAVFGNPIGQSKSPFIHTLFARQTSQQLTYSALQPEHGEFITAAKAFFSEGGRGCNVTAPFKEDAYQFANRLTERAELAGAVNTLKKLDDGEIIGDNTDGEGLVQDLLQHQVTLKGARVLLLGAGGAARGVIQPLLDQKPQQLVVANRTSSKAELLAEMFSSHGNIKGIGLSDVNEGFDVIINSTSSGLSGQLPEVSDVIFNSNSTVYDMVYGSGTTVFNQWALDNGVHAAYDGLGMLVGQAAESFMLWRGLRPGTKQILRELRKNLEM</sequence>
<accession>B7VMW2</accession>
<name>AROE_VIBA3</name>
<comment type="function">
    <text evidence="1">Involved in the biosynthesis of the chorismate, which leads to the biosynthesis of aromatic amino acids. Catalyzes the reversible NADPH linked reduction of 3-dehydroshikimate (DHSA) to yield shikimate (SA).</text>
</comment>
<comment type="catalytic activity">
    <reaction evidence="1">
        <text>shikimate + NADP(+) = 3-dehydroshikimate + NADPH + H(+)</text>
        <dbReference type="Rhea" id="RHEA:17737"/>
        <dbReference type="ChEBI" id="CHEBI:15378"/>
        <dbReference type="ChEBI" id="CHEBI:16630"/>
        <dbReference type="ChEBI" id="CHEBI:36208"/>
        <dbReference type="ChEBI" id="CHEBI:57783"/>
        <dbReference type="ChEBI" id="CHEBI:58349"/>
        <dbReference type="EC" id="1.1.1.25"/>
    </reaction>
</comment>
<comment type="pathway">
    <text evidence="1">Metabolic intermediate biosynthesis; chorismate biosynthesis; chorismate from D-erythrose 4-phosphate and phosphoenolpyruvate: step 4/7.</text>
</comment>
<comment type="subunit">
    <text evidence="1">Homodimer.</text>
</comment>
<comment type="similarity">
    <text evidence="1">Belongs to the shikimate dehydrogenase family.</text>
</comment>
<protein>
    <recommendedName>
        <fullName evidence="1">Shikimate dehydrogenase (NADP(+))</fullName>
        <shortName evidence="1">SDH</shortName>
        <ecNumber evidence="1">1.1.1.25</ecNumber>
    </recommendedName>
</protein>
<gene>
    <name evidence="1" type="primary">aroE</name>
    <name type="ordered locus">VS_3117</name>
</gene>
<keyword id="KW-0028">Amino-acid biosynthesis</keyword>
<keyword id="KW-0057">Aromatic amino acid biosynthesis</keyword>
<keyword id="KW-0521">NADP</keyword>
<keyword id="KW-0560">Oxidoreductase</keyword>
<organism>
    <name type="scientific">Vibrio atlanticus (strain LGP32)</name>
    <name type="common">Vibrio splendidus (strain Mel32)</name>
    <dbReference type="NCBI Taxonomy" id="575788"/>
    <lineage>
        <taxon>Bacteria</taxon>
        <taxon>Pseudomonadati</taxon>
        <taxon>Pseudomonadota</taxon>
        <taxon>Gammaproteobacteria</taxon>
        <taxon>Vibrionales</taxon>
        <taxon>Vibrionaceae</taxon>
        <taxon>Vibrio</taxon>
    </lineage>
</organism>
<dbReference type="EC" id="1.1.1.25" evidence="1"/>
<dbReference type="EMBL" id="FM954972">
    <property type="protein sequence ID" value="CAV20370.1"/>
    <property type="molecule type" value="Genomic_DNA"/>
</dbReference>
<dbReference type="SMR" id="B7VMW2"/>
<dbReference type="STRING" id="575788.VS_3117"/>
<dbReference type="KEGG" id="vsp:VS_3117"/>
<dbReference type="PATRIC" id="fig|575788.5.peg.4279"/>
<dbReference type="eggNOG" id="COG0169">
    <property type="taxonomic scope" value="Bacteria"/>
</dbReference>
<dbReference type="HOGENOM" id="CLU_044063_2_1_6"/>
<dbReference type="UniPathway" id="UPA00053">
    <property type="reaction ID" value="UER00087"/>
</dbReference>
<dbReference type="Proteomes" id="UP000009100">
    <property type="component" value="Chromosome 1"/>
</dbReference>
<dbReference type="GO" id="GO:0005829">
    <property type="term" value="C:cytosol"/>
    <property type="evidence" value="ECO:0007669"/>
    <property type="project" value="TreeGrafter"/>
</dbReference>
<dbReference type="GO" id="GO:0050661">
    <property type="term" value="F:NADP binding"/>
    <property type="evidence" value="ECO:0007669"/>
    <property type="project" value="InterPro"/>
</dbReference>
<dbReference type="GO" id="GO:0004764">
    <property type="term" value="F:shikimate 3-dehydrogenase (NADP+) activity"/>
    <property type="evidence" value="ECO:0007669"/>
    <property type="project" value="UniProtKB-UniRule"/>
</dbReference>
<dbReference type="GO" id="GO:0008652">
    <property type="term" value="P:amino acid biosynthetic process"/>
    <property type="evidence" value="ECO:0007669"/>
    <property type="project" value="UniProtKB-KW"/>
</dbReference>
<dbReference type="GO" id="GO:0009073">
    <property type="term" value="P:aromatic amino acid family biosynthetic process"/>
    <property type="evidence" value="ECO:0007669"/>
    <property type="project" value="UniProtKB-KW"/>
</dbReference>
<dbReference type="GO" id="GO:0009423">
    <property type="term" value="P:chorismate biosynthetic process"/>
    <property type="evidence" value="ECO:0007669"/>
    <property type="project" value="UniProtKB-UniRule"/>
</dbReference>
<dbReference type="GO" id="GO:0019632">
    <property type="term" value="P:shikimate metabolic process"/>
    <property type="evidence" value="ECO:0007669"/>
    <property type="project" value="InterPro"/>
</dbReference>
<dbReference type="CDD" id="cd01065">
    <property type="entry name" value="NAD_bind_Shikimate_DH"/>
    <property type="match status" value="1"/>
</dbReference>
<dbReference type="FunFam" id="3.40.50.10860:FF:000006">
    <property type="entry name" value="Shikimate dehydrogenase (NADP(+))"/>
    <property type="match status" value="1"/>
</dbReference>
<dbReference type="FunFam" id="3.40.50.720:FF:000104">
    <property type="entry name" value="Shikimate dehydrogenase (NADP(+))"/>
    <property type="match status" value="1"/>
</dbReference>
<dbReference type="Gene3D" id="3.40.50.10860">
    <property type="entry name" value="Leucine Dehydrogenase, chain A, domain 1"/>
    <property type="match status" value="1"/>
</dbReference>
<dbReference type="Gene3D" id="3.40.50.720">
    <property type="entry name" value="NAD(P)-binding Rossmann-like Domain"/>
    <property type="match status" value="1"/>
</dbReference>
<dbReference type="HAMAP" id="MF_00222">
    <property type="entry name" value="Shikimate_DH_AroE"/>
    <property type="match status" value="1"/>
</dbReference>
<dbReference type="InterPro" id="IPR046346">
    <property type="entry name" value="Aminoacid_DH-like_N_sf"/>
</dbReference>
<dbReference type="InterPro" id="IPR036291">
    <property type="entry name" value="NAD(P)-bd_dom_sf"/>
</dbReference>
<dbReference type="InterPro" id="IPR041121">
    <property type="entry name" value="SDH_C"/>
</dbReference>
<dbReference type="InterPro" id="IPR011342">
    <property type="entry name" value="Shikimate_DH"/>
</dbReference>
<dbReference type="InterPro" id="IPR013708">
    <property type="entry name" value="Shikimate_DH-bd_N"/>
</dbReference>
<dbReference type="InterPro" id="IPR022893">
    <property type="entry name" value="Shikimate_DH_fam"/>
</dbReference>
<dbReference type="InterPro" id="IPR006151">
    <property type="entry name" value="Shikm_DH/Glu-tRNA_Rdtase"/>
</dbReference>
<dbReference type="NCBIfam" id="TIGR00507">
    <property type="entry name" value="aroE"/>
    <property type="match status" value="1"/>
</dbReference>
<dbReference type="NCBIfam" id="NF001310">
    <property type="entry name" value="PRK00258.1-2"/>
    <property type="match status" value="1"/>
</dbReference>
<dbReference type="PANTHER" id="PTHR21089:SF1">
    <property type="entry name" value="BIFUNCTIONAL 3-DEHYDROQUINATE DEHYDRATASE_SHIKIMATE DEHYDROGENASE, CHLOROPLASTIC"/>
    <property type="match status" value="1"/>
</dbReference>
<dbReference type="PANTHER" id="PTHR21089">
    <property type="entry name" value="SHIKIMATE DEHYDROGENASE"/>
    <property type="match status" value="1"/>
</dbReference>
<dbReference type="Pfam" id="PF18317">
    <property type="entry name" value="SDH_C"/>
    <property type="match status" value="1"/>
</dbReference>
<dbReference type="Pfam" id="PF01488">
    <property type="entry name" value="Shikimate_DH"/>
    <property type="match status" value="1"/>
</dbReference>
<dbReference type="Pfam" id="PF08501">
    <property type="entry name" value="Shikimate_dh_N"/>
    <property type="match status" value="1"/>
</dbReference>
<dbReference type="SUPFAM" id="SSF53223">
    <property type="entry name" value="Aminoacid dehydrogenase-like, N-terminal domain"/>
    <property type="match status" value="1"/>
</dbReference>
<dbReference type="SUPFAM" id="SSF51735">
    <property type="entry name" value="NAD(P)-binding Rossmann-fold domains"/>
    <property type="match status" value="1"/>
</dbReference>
<proteinExistence type="inferred from homology"/>
<reference key="1">
    <citation type="submission" date="2009-02" db="EMBL/GenBank/DDBJ databases">
        <title>Vibrio splendidus str. LGP32 complete genome.</title>
        <authorList>
            <person name="Mazel D."/>
            <person name="Le Roux F."/>
        </authorList>
    </citation>
    <scope>NUCLEOTIDE SEQUENCE [LARGE SCALE GENOMIC DNA]</scope>
    <source>
        <strain>LGP32</strain>
    </source>
</reference>